<feature type="chain" id="PRO_1000119184" description="Glutamate racemase">
    <location>
        <begin position="1"/>
        <end position="281"/>
    </location>
</feature>
<feature type="active site" description="Proton donor/acceptor" evidence="1">
    <location>
        <position position="76"/>
    </location>
</feature>
<feature type="active site" description="Proton donor/acceptor" evidence="1">
    <location>
        <position position="185"/>
    </location>
</feature>
<feature type="binding site" evidence="1">
    <location>
        <begin position="13"/>
        <end position="14"/>
    </location>
    <ligand>
        <name>substrate</name>
    </ligand>
</feature>
<feature type="binding site" evidence="1">
    <location>
        <begin position="45"/>
        <end position="46"/>
    </location>
    <ligand>
        <name>substrate</name>
    </ligand>
</feature>
<feature type="binding site" evidence="1">
    <location>
        <begin position="77"/>
        <end position="78"/>
    </location>
    <ligand>
        <name>substrate</name>
    </ligand>
</feature>
<feature type="binding site" evidence="1">
    <location>
        <begin position="186"/>
        <end position="187"/>
    </location>
    <ligand>
        <name>substrate</name>
    </ligand>
</feature>
<reference key="1">
    <citation type="journal article" date="2011" name="MBio">
        <title>Novel metabolic attributes of the genus Cyanothece, comprising a group of unicellular nitrogen-fixing Cyanobacteria.</title>
        <authorList>
            <person name="Bandyopadhyay A."/>
            <person name="Elvitigala T."/>
            <person name="Welsh E."/>
            <person name="Stockel J."/>
            <person name="Liberton M."/>
            <person name="Min H."/>
            <person name="Sherman L.A."/>
            <person name="Pakrasi H.B."/>
        </authorList>
    </citation>
    <scope>NUCLEOTIDE SEQUENCE [LARGE SCALE GENOMIC DNA]</scope>
    <source>
        <strain>PCC 8801 / RF-1</strain>
    </source>
</reference>
<sequence>MRSVQNSPIGVFDSGVGGLTVLRELYRQLPQESMLYFADTARLPYGNRSGAEILQYVREILVWMSQQNVKMVIMACNTSSALALDIVRSEFNFPILGVILPGARAAVKQGQRIGVISTPATAKSNAYRQAIQEINPKAQVWQVGCAEFVPLIEANRIHDPYTKQVAWKYLAPLLAQNIDTLVYGCTHYRHLSPIFQEIIPPTVNLIDPANFVVAAAKKELELMGLRHNEPPLPTRFAVSGCPQTFSQISQQWLGYYPLTEQVSLPMTINPSLVREELEILE</sequence>
<keyword id="KW-0133">Cell shape</keyword>
<keyword id="KW-0961">Cell wall biogenesis/degradation</keyword>
<keyword id="KW-0413">Isomerase</keyword>
<keyword id="KW-0573">Peptidoglycan synthesis</keyword>
<keyword id="KW-1185">Reference proteome</keyword>
<gene>
    <name evidence="1" type="primary">murI</name>
    <name type="ordered locus">PCC8801_0588</name>
</gene>
<name>MURI_RIPO1</name>
<proteinExistence type="inferred from homology"/>
<dbReference type="EC" id="5.1.1.3" evidence="1"/>
<dbReference type="EMBL" id="CP001287">
    <property type="protein sequence ID" value="ACK64676.1"/>
    <property type="molecule type" value="Genomic_DNA"/>
</dbReference>
<dbReference type="RefSeq" id="WP_012593953.1">
    <property type="nucleotide sequence ID" value="NC_011726.1"/>
</dbReference>
<dbReference type="SMR" id="B7JWN0"/>
<dbReference type="STRING" id="41431.PCC8801_0588"/>
<dbReference type="KEGG" id="cyp:PCC8801_0588"/>
<dbReference type="eggNOG" id="COG0796">
    <property type="taxonomic scope" value="Bacteria"/>
</dbReference>
<dbReference type="HOGENOM" id="CLU_052344_0_2_3"/>
<dbReference type="OrthoDB" id="9801055at2"/>
<dbReference type="UniPathway" id="UPA00219"/>
<dbReference type="Proteomes" id="UP000008204">
    <property type="component" value="Chromosome"/>
</dbReference>
<dbReference type="GO" id="GO:0008881">
    <property type="term" value="F:glutamate racemase activity"/>
    <property type="evidence" value="ECO:0007669"/>
    <property type="project" value="UniProtKB-UniRule"/>
</dbReference>
<dbReference type="GO" id="GO:0071555">
    <property type="term" value="P:cell wall organization"/>
    <property type="evidence" value="ECO:0007669"/>
    <property type="project" value="UniProtKB-KW"/>
</dbReference>
<dbReference type="GO" id="GO:0009252">
    <property type="term" value="P:peptidoglycan biosynthetic process"/>
    <property type="evidence" value="ECO:0007669"/>
    <property type="project" value="UniProtKB-UniRule"/>
</dbReference>
<dbReference type="GO" id="GO:0008360">
    <property type="term" value="P:regulation of cell shape"/>
    <property type="evidence" value="ECO:0007669"/>
    <property type="project" value="UniProtKB-KW"/>
</dbReference>
<dbReference type="FunFam" id="3.40.50.1860:FF:000002">
    <property type="entry name" value="Glutamate racemase"/>
    <property type="match status" value="1"/>
</dbReference>
<dbReference type="Gene3D" id="3.40.50.1860">
    <property type="match status" value="2"/>
</dbReference>
<dbReference type="HAMAP" id="MF_00258">
    <property type="entry name" value="Glu_racemase"/>
    <property type="match status" value="1"/>
</dbReference>
<dbReference type="InterPro" id="IPR015942">
    <property type="entry name" value="Asp/Glu/hydantoin_racemase"/>
</dbReference>
<dbReference type="InterPro" id="IPR001920">
    <property type="entry name" value="Asp/Glu_race"/>
</dbReference>
<dbReference type="InterPro" id="IPR018187">
    <property type="entry name" value="Asp/Glu_racemase_AS_1"/>
</dbReference>
<dbReference type="InterPro" id="IPR033134">
    <property type="entry name" value="Asp/Glu_racemase_AS_2"/>
</dbReference>
<dbReference type="InterPro" id="IPR004391">
    <property type="entry name" value="Glu_race"/>
</dbReference>
<dbReference type="NCBIfam" id="TIGR00067">
    <property type="entry name" value="glut_race"/>
    <property type="match status" value="1"/>
</dbReference>
<dbReference type="PANTHER" id="PTHR21198">
    <property type="entry name" value="GLUTAMATE RACEMASE"/>
    <property type="match status" value="1"/>
</dbReference>
<dbReference type="PANTHER" id="PTHR21198:SF2">
    <property type="entry name" value="GLUTAMATE RACEMASE"/>
    <property type="match status" value="1"/>
</dbReference>
<dbReference type="Pfam" id="PF01177">
    <property type="entry name" value="Asp_Glu_race"/>
    <property type="match status" value="1"/>
</dbReference>
<dbReference type="SUPFAM" id="SSF53681">
    <property type="entry name" value="Aspartate/glutamate racemase"/>
    <property type="match status" value="2"/>
</dbReference>
<dbReference type="PROSITE" id="PS00923">
    <property type="entry name" value="ASP_GLU_RACEMASE_1"/>
    <property type="match status" value="1"/>
</dbReference>
<dbReference type="PROSITE" id="PS00924">
    <property type="entry name" value="ASP_GLU_RACEMASE_2"/>
    <property type="match status" value="1"/>
</dbReference>
<evidence type="ECO:0000255" key="1">
    <source>
        <dbReference type="HAMAP-Rule" id="MF_00258"/>
    </source>
</evidence>
<comment type="function">
    <text evidence="1">Provides the (R)-glutamate required for cell wall biosynthesis.</text>
</comment>
<comment type="catalytic activity">
    <reaction evidence="1">
        <text>L-glutamate = D-glutamate</text>
        <dbReference type="Rhea" id="RHEA:12813"/>
        <dbReference type="ChEBI" id="CHEBI:29985"/>
        <dbReference type="ChEBI" id="CHEBI:29986"/>
        <dbReference type="EC" id="5.1.1.3"/>
    </reaction>
</comment>
<comment type="pathway">
    <text evidence="1">Cell wall biogenesis; peptidoglycan biosynthesis.</text>
</comment>
<comment type="similarity">
    <text evidence="1">Belongs to the aspartate/glutamate racemases family.</text>
</comment>
<organism>
    <name type="scientific">Rippkaea orientalis (strain PCC 8801 / RF-1)</name>
    <name type="common">Cyanothece sp. (strain PCC 8801)</name>
    <dbReference type="NCBI Taxonomy" id="41431"/>
    <lineage>
        <taxon>Bacteria</taxon>
        <taxon>Bacillati</taxon>
        <taxon>Cyanobacteriota</taxon>
        <taxon>Cyanophyceae</taxon>
        <taxon>Oscillatoriophycideae</taxon>
        <taxon>Chroococcales</taxon>
        <taxon>Aphanothecaceae</taxon>
        <taxon>Rippkaea</taxon>
        <taxon>Rippkaea orientalis</taxon>
    </lineage>
</organism>
<accession>B7JWN0</accession>
<protein>
    <recommendedName>
        <fullName evidence="1">Glutamate racemase</fullName>
        <ecNumber evidence="1">5.1.1.3</ecNumber>
    </recommendedName>
</protein>